<organism>
    <name type="scientific">Saccharolobus islandicus (strain Y.G.57.14 / Yellowstone #1)</name>
    <name type="common">Sulfolobus islandicus</name>
    <dbReference type="NCBI Taxonomy" id="439386"/>
    <lineage>
        <taxon>Archaea</taxon>
        <taxon>Thermoproteota</taxon>
        <taxon>Thermoprotei</taxon>
        <taxon>Sulfolobales</taxon>
        <taxon>Sulfolobaceae</taxon>
        <taxon>Saccharolobus</taxon>
    </lineage>
</organism>
<comment type="function">
    <text evidence="1">DNA-dependent RNA polymerase (RNAP) catalyzes the transcription of DNA into RNA using the four ribonucleoside triphosphates as substrates.</text>
</comment>
<comment type="catalytic activity">
    <reaction evidence="1">
        <text>RNA(n) + a ribonucleoside 5'-triphosphate = RNA(n+1) + diphosphate</text>
        <dbReference type="Rhea" id="RHEA:21248"/>
        <dbReference type="Rhea" id="RHEA-COMP:14527"/>
        <dbReference type="Rhea" id="RHEA-COMP:17342"/>
        <dbReference type="ChEBI" id="CHEBI:33019"/>
        <dbReference type="ChEBI" id="CHEBI:61557"/>
        <dbReference type="ChEBI" id="CHEBI:140395"/>
        <dbReference type="EC" id="2.7.7.6"/>
    </reaction>
</comment>
<comment type="cofactor">
    <cofactor evidence="1">
        <name>Zn(2+)</name>
        <dbReference type="ChEBI" id="CHEBI:29105"/>
    </cofactor>
    <text evidence="1">Binds 1 zinc ion.</text>
</comment>
<comment type="subunit">
    <text evidence="1">Part of the RNA polymerase complex.</text>
</comment>
<comment type="subcellular location">
    <subcellularLocation>
        <location evidence="1">Cytoplasm</location>
    </subcellularLocation>
</comment>
<comment type="similarity">
    <text evidence="1">Belongs to the archaeal Rpo10/eukaryotic RPB10 RNA polymerase subunit family.</text>
</comment>
<accession>C3N8S2</accession>
<name>RPO10_SACI7</name>
<evidence type="ECO:0000255" key="1">
    <source>
        <dbReference type="HAMAP-Rule" id="MF_00250"/>
    </source>
</evidence>
<gene>
    <name evidence="1" type="primary">rpo10</name>
    <name evidence="1" type="synonym">rpoN</name>
    <name type="ordered locus">YG5714_2178</name>
</gene>
<dbReference type="EC" id="2.7.7.6" evidence="1"/>
<dbReference type="EMBL" id="CP001403">
    <property type="protein sequence ID" value="ACP46427.1"/>
    <property type="molecule type" value="Genomic_DNA"/>
</dbReference>
<dbReference type="RefSeq" id="WP_012712019.1">
    <property type="nucleotide sequence ID" value="NC_012622.1"/>
</dbReference>
<dbReference type="SMR" id="C3N8S2"/>
<dbReference type="KEGG" id="siy:YG5714_2178"/>
<dbReference type="HOGENOM" id="CLU_143122_1_1_2"/>
<dbReference type="Proteomes" id="UP000002308">
    <property type="component" value="Chromosome"/>
</dbReference>
<dbReference type="GO" id="GO:0005737">
    <property type="term" value="C:cytoplasm"/>
    <property type="evidence" value="ECO:0007669"/>
    <property type="project" value="UniProtKB-SubCell"/>
</dbReference>
<dbReference type="GO" id="GO:0000428">
    <property type="term" value="C:DNA-directed RNA polymerase complex"/>
    <property type="evidence" value="ECO:0007669"/>
    <property type="project" value="UniProtKB-KW"/>
</dbReference>
<dbReference type="GO" id="GO:0003677">
    <property type="term" value="F:DNA binding"/>
    <property type="evidence" value="ECO:0007669"/>
    <property type="project" value="InterPro"/>
</dbReference>
<dbReference type="GO" id="GO:0003899">
    <property type="term" value="F:DNA-directed RNA polymerase activity"/>
    <property type="evidence" value="ECO:0007669"/>
    <property type="project" value="UniProtKB-UniRule"/>
</dbReference>
<dbReference type="GO" id="GO:0008270">
    <property type="term" value="F:zinc ion binding"/>
    <property type="evidence" value="ECO:0007669"/>
    <property type="project" value="UniProtKB-UniRule"/>
</dbReference>
<dbReference type="GO" id="GO:0006351">
    <property type="term" value="P:DNA-templated transcription"/>
    <property type="evidence" value="ECO:0007669"/>
    <property type="project" value="UniProtKB-UniRule"/>
</dbReference>
<dbReference type="FunFam" id="1.10.10.60:FF:000335">
    <property type="entry name" value="DNA-directed RNA polymerase subunit N, putative"/>
    <property type="match status" value="1"/>
</dbReference>
<dbReference type="Gene3D" id="1.10.10.60">
    <property type="entry name" value="Homeodomain-like"/>
    <property type="match status" value="1"/>
</dbReference>
<dbReference type="HAMAP" id="MF_00250">
    <property type="entry name" value="RNApol_arch_Rpo10"/>
    <property type="match status" value="1"/>
</dbReference>
<dbReference type="InterPro" id="IPR023580">
    <property type="entry name" value="RNA_pol_su_RPB10"/>
</dbReference>
<dbReference type="InterPro" id="IPR020789">
    <property type="entry name" value="RNA_pol_suN_Zn-BS"/>
</dbReference>
<dbReference type="InterPro" id="IPR000268">
    <property type="entry name" value="RPABC5/Rpb10"/>
</dbReference>
<dbReference type="NCBIfam" id="NF003089">
    <property type="entry name" value="PRK04016.1"/>
    <property type="match status" value="1"/>
</dbReference>
<dbReference type="PANTHER" id="PTHR23431:SF3">
    <property type="entry name" value="DNA-DIRECTED RNA POLYMERASES I, II, AND III SUBUNIT RPABC5"/>
    <property type="match status" value="1"/>
</dbReference>
<dbReference type="PANTHER" id="PTHR23431">
    <property type="entry name" value="DNA-DIRECTED RNA POLYMERASES I, II, AND III SUBUNIT RPABC5 FAMILY MEMBER"/>
    <property type="match status" value="1"/>
</dbReference>
<dbReference type="Pfam" id="PF01194">
    <property type="entry name" value="RNA_pol_N"/>
    <property type="match status" value="1"/>
</dbReference>
<dbReference type="PIRSF" id="PIRSF005653">
    <property type="entry name" value="RNA_pol_N/8_sub"/>
    <property type="match status" value="1"/>
</dbReference>
<dbReference type="SUPFAM" id="SSF46924">
    <property type="entry name" value="RNA polymerase subunit RPB10"/>
    <property type="match status" value="1"/>
</dbReference>
<dbReference type="PROSITE" id="PS01112">
    <property type="entry name" value="RNA_POL_N_8KD"/>
    <property type="match status" value="1"/>
</dbReference>
<protein>
    <recommendedName>
        <fullName evidence="1">DNA-directed RNA polymerase subunit Rpo10</fullName>
        <ecNumber evidence="1">2.7.7.6</ecNumber>
    </recommendedName>
    <alternativeName>
        <fullName evidence="1">DNA-directed RNA polymerase subunit N</fullName>
    </alternativeName>
</protein>
<reference key="1">
    <citation type="journal article" date="2009" name="Proc. Natl. Acad. Sci. U.S.A.">
        <title>Biogeography of the Sulfolobus islandicus pan-genome.</title>
        <authorList>
            <person name="Reno M.L."/>
            <person name="Held N.L."/>
            <person name="Fields C.J."/>
            <person name="Burke P.V."/>
            <person name="Whitaker R.J."/>
        </authorList>
    </citation>
    <scope>NUCLEOTIDE SEQUENCE [LARGE SCALE GENOMIC DNA]</scope>
    <source>
        <strain>Y.G.57.14 / Yellowstone #1</strain>
    </source>
</reference>
<feature type="chain" id="PRO_1000204539" description="DNA-directed RNA polymerase subunit Rpo10">
    <location>
        <begin position="1"/>
        <end position="66"/>
    </location>
</feature>
<feature type="binding site" evidence="1">
    <location>
        <position position="7"/>
    </location>
    <ligand>
        <name>Zn(2+)</name>
        <dbReference type="ChEBI" id="CHEBI:29105"/>
    </ligand>
</feature>
<feature type="binding site" evidence="1">
    <location>
        <position position="10"/>
    </location>
    <ligand>
        <name>Zn(2+)</name>
        <dbReference type="ChEBI" id="CHEBI:29105"/>
    </ligand>
</feature>
<feature type="binding site" evidence="1">
    <location>
        <position position="44"/>
    </location>
    <ligand>
        <name>Zn(2+)</name>
        <dbReference type="ChEBI" id="CHEBI:29105"/>
    </ligand>
</feature>
<feature type="binding site" evidence="1">
    <location>
        <position position="45"/>
    </location>
    <ligand>
        <name>Zn(2+)</name>
        <dbReference type="ChEBI" id="CHEBI:29105"/>
    </ligand>
</feature>
<keyword id="KW-0963">Cytoplasm</keyword>
<keyword id="KW-0240">DNA-directed RNA polymerase</keyword>
<keyword id="KW-0479">Metal-binding</keyword>
<keyword id="KW-0548">Nucleotidyltransferase</keyword>
<keyword id="KW-0804">Transcription</keyword>
<keyword id="KW-0808">Transferase</keyword>
<keyword id="KW-0862">Zinc</keyword>
<proteinExistence type="inferred from homology"/>
<sequence length="66" mass="7606">MMIPIRCFTCGSLIADKWQPFITRVNAGENPGKVLDDLGVKRYCCRRMLLSHIDIISEVIHYTRPI</sequence>